<gene>
    <name type="primary">virB2</name>
    <name type="ordered locus">BMEII0026</name>
</gene>
<feature type="signal peptide" evidence="1">
    <location>
        <begin position="1"/>
        <end position="36"/>
    </location>
</feature>
<feature type="chain" id="PRO_0000291451" description="Type IV secretion system protein virB2">
    <location>
        <begin position="37"/>
        <end position="105"/>
    </location>
</feature>
<feature type="transmembrane region" description="Helical" evidence="1">
    <location>
        <begin position="50"/>
        <end position="70"/>
    </location>
</feature>
<feature type="transmembrane region" description="Helical" evidence="1">
    <location>
        <begin position="83"/>
        <end position="103"/>
    </location>
</feature>
<reference key="1">
    <citation type="submission" date="2006-12" db="EMBL/GenBank/DDBJ databases">
        <authorList>
            <person name="Wang Y."/>
            <person name="Chen C."/>
            <person name="Cao X."/>
        </authorList>
    </citation>
    <scope>NUCLEOTIDE SEQUENCE [GENOMIC DNA]</scope>
    <source>
        <strain>63/290</strain>
    </source>
</reference>
<reference key="2">
    <citation type="journal article" date="2002" name="Proc. Natl. Acad. Sci. U.S.A.">
        <title>The genome sequence of the facultative intracellular pathogen Brucella melitensis.</title>
        <authorList>
            <person name="DelVecchio V.G."/>
            <person name="Kapatral V."/>
            <person name="Redkar R.J."/>
            <person name="Patra G."/>
            <person name="Mujer C."/>
            <person name="Los T."/>
            <person name="Ivanova N."/>
            <person name="Anderson I."/>
            <person name="Bhattacharyya A."/>
            <person name="Lykidis A."/>
            <person name="Reznik G."/>
            <person name="Jablonski L."/>
            <person name="Larsen N."/>
            <person name="D'Souza M."/>
            <person name="Bernal A."/>
            <person name="Mazur M."/>
            <person name="Goltsman E."/>
            <person name="Selkov E."/>
            <person name="Elzer P.H."/>
            <person name="Hagius S."/>
            <person name="O'Callaghan D."/>
            <person name="Letesson J.-J."/>
            <person name="Haselkorn R."/>
            <person name="Kyrpides N.C."/>
            <person name="Overbeek R."/>
        </authorList>
    </citation>
    <scope>NUCLEOTIDE SEQUENCE [LARGE SCALE GENOMIC DNA]</scope>
    <source>
        <strain>ATCC 23456 / CCUG 17765 / NCTC 10094 / 16M</strain>
    </source>
</reference>
<protein>
    <recommendedName>
        <fullName>Type IV secretion system protein virB2</fullName>
    </recommendedName>
</protein>
<keyword id="KW-1003">Cell membrane</keyword>
<keyword id="KW-0472">Membrane</keyword>
<keyword id="KW-0732">Signal</keyword>
<keyword id="KW-0812">Transmembrane</keyword>
<keyword id="KW-1133">Transmembrane helix</keyword>
<keyword id="KW-0843">Virulence</keyword>
<proteinExistence type="inferred from homology"/>
<name>VIRB2_BRUME</name>
<accession>Q9RPY3</accession>
<evidence type="ECO:0000255" key="1"/>
<evidence type="ECO:0000305" key="2"/>
<organism>
    <name type="scientific">Brucella melitensis biotype 1 (strain ATCC 23456 / CCUG 17765 / NCTC 10094 / 16M)</name>
    <dbReference type="NCBI Taxonomy" id="224914"/>
    <lineage>
        <taxon>Bacteria</taxon>
        <taxon>Pseudomonadati</taxon>
        <taxon>Pseudomonadota</taxon>
        <taxon>Alphaproteobacteria</taxon>
        <taxon>Hyphomicrobiales</taxon>
        <taxon>Brucellaceae</taxon>
        <taxon>Brucella/Ochrobactrum group</taxon>
        <taxon>Brucella</taxon>
    </lineage>
</organism>
<sequence>MKTASPSKKSLSRILPHLLLALIVSIAAIEPNLAHANGGLDKVNTSMQKVLDLLSGVSITIVTIAIIWSGYKMAFRHARFMDVVPVLGGALVVGAAAEIASYLLR</sequence>
<comment type="subcellular location">
    <subcellularLocation>
        <location evidence="2">Cell membrane</location>
        <topology evidence="2">Multi-pass membrane protein</topology>
    </subcellularLocation>
</comment>
<comment type="similarity">
    <text evidence="2">Belongs to the PtlA family.</text>
</comment>
<dbReference type="EMBL" id="EF208926">
    <property type="protein sequence ID" value="ABM66830.1"/>
    <property type="molecule type" value="Genomic_DNA"/>
</dbReference>
<dbReference type="EMBL" id="AE008918">
    <property type="protein sequence ID" value="AAL53267.1"/>
    <property type="molecule type" value="Genomic_DNA"/>
</dbReference>
<dbReference type="PIR" id="AH3512">
    <property type="entry name" value="AH3512"/>
</dbReference>
<dbReference type="RefSeq" id="WP_002967165.1">
    <property type="nucleotide sequence ID" value="NZ_GG703779.1"/>
</dbReference>
<dbReference type="SMR" id="Q9RPY3"/>
<dbReference type="KEGG" id="bme:BMEII0026"/>
<dbReference type="KEGG" id="bmel:DK63_2093"/>
<dbReference type="PATRIC" id="fig|224914.52.peg.2194"/>
<dbReference type="eggNOG" id="ENOG5033CNI">
    <property type="taxonomic scope" value="Bacteria"/>
</dbReference>
<dbReference type="Proteomes" id="UP000000419">
    <property type="component" value="Chromosome II"/>
</dbReference>
<dbReference type="GO" id="GO:0005886">
    <property type="term" value="C:plasma membrane"/>
    <property type="evidence" value="ECO:0007669"/>
    <property type="project" value="UniProtKB-SubCell"/>
</dbReference>
<dbReference type="InterPro" id="IPR007039">
    <property type="entry name" value="TrbC/VirB2"/>
</dbReference>
<dbReference type="Pfam" id="PF04956">
    <property type="entry name" value="TrbC"/>
    <property type="match status" value="1"/>
</dbReference>